<keyword id="KW-0010">Activator</keyword>
<keyword id="KW-0238">DNA-binding</keyword>
<keyword id="KW-0539">Nucleus</keyword>
<keyword id="KW-1185">Reference proteome</keyword>
<keyword id="KW-0804">Transcription</keyword>
<keyword id="KW-0805">Transcription regulation</keyword>
<evidence type="ECO:0000250" key="1">
    <source>
        <dbReference type="UniProtKB" id="Q9FKA0"/>
    </source>
</evidence>
<evidence type="ECO:0000255" key="2">
    <source>
        <dbReference type="PROSITE-ProRule" id="PRU00353"/>
    </source>
</evidence>
<evidence type="ECO:0000269" key="3">
    <source>
    </source>
</evidence>
<evidence type="ECO:0000269" key="4">
    <source>
    </source>
</evidence>
<evidence type="ECO:0000269" key="5">
    <source>
    </source>
</evidence>
<evidence type="ECO:0000303" key="6">
    <source>
    </source>
</evidence>
<evidence type="ECO:0000303" key="7">
    <source>
    </source>
</evidence>
<evidence type="ECO:0000303" key="8">
    <source>
    </source>
</evidence>
<evidence type="ECO:0000312" key="9">
    <source>
        <dbReference type="Araport" id="AT3G29035"/>
    </source>
</evidence>
<evidence type="ECO:0000312" key="10">
    <source>
        <dbReference type="EMBL" id="AAL32716.1"/>
    </source>
</evidence>
<evidence type="ECO:0000312" key="11">
    <source>
        <dbReference type="Proteomes" id="UP000006548"/>
    </source>
</evidence>
<sequence>MDYKVSRSGEIVEGEVEDSEKIDLPPGFRFHPTDEELITHYLRPKVVNSFFSAIAIGEVDLNKVEPWDLPWKAKLGEKEWYFFCVRDRKYPTGLRTNRATKAGYWKATGKDKEIFKGKSLVGMKKTLVFYKGRAPKGVKTNWVMHEYRLEGKFAIDNLSKTAKNECVISRVFHTRTDGTKEHMSVGLPPLMDSSPYLKSRGQDSLAGTTLGGLLSHVTYFSDQTTDDKSLVADFKTTMFGSGSTNFLPNIGSLLDFDPLFLQNNSSVLKMLLDNEETQFKKNLHNSGSSESELTASSWQGHNSYGSTGPVNLDCVWKF</sequence>
<proteinExistence type="evidence at protein level"/>
<gene>
    <name evidence="6" type="primary">NAC59</name>
    <name evidence="7" type="synonym">NAC3</name>
    <name evidence="8" type="synonym">ORS1</name>
    <name evidence="9" type="ordered locus">At3g29035</name>
    <name evidence="10" type="ORF">MRI12.1</name>
</gene>
<feature type="chain" id="PRO_0000433471" description="NAC domain-containing protein 59">
    <location>
        <begin position="1"/>
        <end position="318"/>
    </location>
</feature>
<feature type="domain" description="NAC" evidence="2">
    <location>
        <begin position="24"/>
        <end position="174"/>
    </location>
</feature>
<feature type="DNA-binding region" evidence="2">
    <location>
        <begin position="121"/>
        <end position="180"/>
    </location>
</feature>
<reference key="1">
    <citation type="journal article" date="2000" name="DNA Res.">
        <title>Structural analysis of Arabidopsis thaliana chromosome 3. II. Sequence features of the 4,251,695 bp regions covered by 90 P1, TAC and BAC clones.</title>
        <authorList>
            <person name="Kaneko T."/>
            <person name="Katoh T."/>
            <person name="Sato S."/>
            <person name="Nakamura Y."/>
            <person name="Asamizu E."/>
            <person name="Tabata S."/>
        </authorList>
    </citation>
    <scope>NUCLEOTIDE SEQUENCE [LARGE SCALE GENOMIC DNA]</scope>
    <source>
        <strain>cv. Columbia</strain>
    </source>
</reference>
<reference key="2">
    <citation type="journal article" date="2000" name="DNA Res.">
        <title>Structural analysis of Arabidopsis thaliana chromosome 3. I. Sequence features of the regions of 4,504,864 bp covered by sixty P1 and TAC clones.</title>
        <authorList>
            <person name="Sato S."/>
            <person name="Nakamura Y."/>
            <person name="Kaneko T."/>
            <person name="Katoh T."/>
            <person name="Asamizu E."/>
            <person name="Tabata S."/>
        </authorList>
    </citation>
    <scope>NUCLEOTIDE SEQUENCE [LARGE SCALE GENOMIC DNA]</scope>
    <source>
        <strain>cv. Columbia</strain>
    </source>
</reference>
<reference key="3">
    <citation type="journal article" date="2017" name="Plant J.">
        <title>Araport11: a complete reannotation of the Arabidopsis thaliana reference genome.</title>
        <authorList>
            <person name="Cheng C.Y."/>
            <person name="Krishnakumar V."/>
            <person name="Chan A.P."/>
            <person name="Thibaud-Nissen F."/>
            <person name="Schobel S."/>
            <person name="Town C.D."/>
        </authorList>
    </citation>
    <scope>GENOME REANNOTATION</scope>
    <source>
        <strain>cv. Columbia</strain>
    </source>
</reference>
<reference key="4">
    <citation type="journal article" date="2003" name="Science">
        <title>Empirical analysis of transcriptional activity in the Arabidopsis genome.</title>
        <authorList>
            <person name="Yamada K."/>
            <person name="Lim J."/>
            <person name="Dale J.M."/>
            <person name="Chen H."/>
            <person name="Shinn P."/>
            <person name="Palm C.J."/>
            <person name="Southwick A.M."/>
            <person name="Wu H.C."/>
            <person name="Kim C.J."/>
            <person name="Nguyen M."/>
            <person name="Pham P.K."/>
            <person name="Cheuk R.F."/>
            <person name="Karlin-Newmann G."/>
            <person name="Liu S.X."/>
            <person name="Lam B."/>
            <person name="Sakano H."/>
            <person name="Wu T."/>
            <person name="Yu G."/>
            <person name="Miranda M."/>
            <person name="Quach H.L."/>
            <person name="Tripp M."/>
            <person name="Chang C.H."/>
            <person name="Lee J.M."/>
            <person name="Toriumi M.J."/>
            <person name="Chan M.M."/>
            <person name="Tang C.C."/>
            <person name="Onodera C.S."/>
            <person name="Deng J.M."/>
            <person name="Akiyama K."/>
            <person name="Ansari Y."/>
            <person name="Arakawa T."/>
            <person name="Banh J."/>
            <person name="Banno F."/>
            <person name="Bowser L."/>
            <person name="Brooks S.Y."/>
            <person name="Carninci P."/>
            <person name="Chao Q."/>
            <person name="Choy N."/>
            <person name="Enju A."/>
            <person name="Goldsmith A.D."/>
            <person name="Gurjal M."/>
            <person name="Hansen N.F."/>
            <person name="Hayashizaki Y."/>
            <person name="Johnson-Hopson C."/>
            <person name="Hsuan V.W."/>
            <person name="Iida K."/>
            <person name="Karnes M."/>
            <person name="Khan S."/>
            <person name="Koesema E."/>
            <person name="Ishida J."/>
            <person name="Jiang P.X."/>
            <person name="Jones T."/>
            <person name="Kawai J."/>
            <person name="Kamiya A."/>
            <person name="Meyers C."/>
            <person name="Nakajima M."/>
            <person name="Narusaka M."/>
            <person name="Seki M."/>
            <person name="Sakurai T."/>
            <person name="Satou M."/>
            <person name="Tamse R."/>
            <person name="Vaysberg M."/>
            <person name="Wallender E.K."/>
            <person name="Wong C."/>
            <person name="Yamamura Y."/>
            <person name="Yuan S."/>
            <person name="Shinozaki K."/>
            <person name="Davis R.W."/>
            <person name="Theologis A."/>
            <person name="Ecker J.R."/>
        </authorList>
    </citation>
    <scope>NUCLEOTIDE SEQUENCE [LARGE SCALE MRNA]</scope>
    <source>
        <strain>cv. Columbia</strain>
    </source>
</reference>
<reference key="5">
    <citation type="journal article" date="2003" name="DNA Res.">
        <title>Comprehensive analysis of NAC family genes in Oryza sativa and Arabidopsis thaliana.</title>
        <authorList>
            <person name="Ooka H."/>
            <person name="Satoh K."/>
            <person name="Doi K."/>
            <person name="Nagata T."/>
            <person name="Otomo Y."/>
            <person name="Murakami K."/>
            <person name="Matsubara K."/>
            <person name="Osato N."/>
            <person name="Kawai J."/>
            <person name="Carninci P."/>
            <person name="Hayashizaki Y."/>
            <person name="Suzuki K."/>
            <person name="Kojima K."/>
            <person name="Takahara Y."/>
            <person name="Yamamoto K."/>
            <person name="Kikuchi S."/>
        </authorList>
    </citation>
    <scope>GENE FAMILY</scope>
    <scope>NOMENCLATURE</scope>
</reference>
<reference key="6">
    <citation type="journal article" date="2005" name="Plant J.">
        <title>AtNAC2, a transcription factor downstream of ethylene and auxin signaling pathways, is involved in salt stress response and lateral root development.</title>
        <authorList>
            <person name="He X.-J."/>
            <person name="Mu R.-L."/>
            <person name="Cao W.-H."/>
            <person name="Zhang Z.-G."/>
            <person name="Zhang J.-S."/>
            <person name="Chen S.-Y."/>
        </authorList>
    </citation>
    <scope>FUNCTION</scope>
</reference>
<reference key="7">
    <citation type="journal article" date="2006" name="Proc. Natl. Acad. Sci. U.S.A.">
        <title>Transcriptional and posttranscriptional regulation of transcription factor expression in Arabidopsis roots.</title>
        <authorList>
            <person name="Lee J.-Y."/>
            <person name="Colinas J."/>
            <person name="Wang J.Y."/>
            <person name="Mace D."/>
            <person name="Ohler U."/>
            <person name="Benfey P.N."/>
        </authorList>
    </citation>
    <scope>TISSUE SPECIFICITY</scope>
</reference>
<reference key="8">
    <citation type="journal article" date="2011" name="Mol. Plant">
        <title>ORS1, an H(2)O(2)-responsive NAC transcription factor, controls senescence in Arabidopsis thaliana.</title>
        <authorList>
            <person name="Balazadeh S."/>
            <person name="Kwasniewski M."/>
            <person name="Caldana C."/>
            <person name="Mehrnia M."/>
            <person name="Zanor M.I."/>
            <person name="Xue G.-P."/>
            <person name="Mueller-Roeber B."/>
        </authorList>
    </citation>
    <scope>FUNCTION</scope>
    <scope>DISRUPTION PHENOTYPE</scope>
    <scope>INDUCTION BY WOUNDING; H2O2 AND SENESCENCE</scope>
    <scope>DEVELOPMENTAL STAGE</scope>
    <scope>TISSUE SPECIFICITY</scope>
    <scope>DNA-BINDING</scope>
    <source>
        <strain>cv. Columbia</strain>
    </source>
</reference>
<accession>Q9LJW3</accession>
<name>NAC59_ARATH</name>
<protein>
    <recommendedName>
        <fullName evidence="6">NAC domain-containing protein 59</fullName>
        <shortName evidence="6">ANAC059</shortName>
        <shortName evidence="7">AtNAC3</shortName>
    </recommendedName>
    <alternativeName>
        <fullName evidence="8">Protein ORE1 SISTER1</fullName>
    </alternativeName>
</protein>
<dbReference type="EMBL" id="AP000388">
    <property type="protein sequence ID" value="BAB02945.1"/>
    <property type="molecule type" value="Genomic_DNA"/>
</dbReference>
<dbReference type="EMBL" id="AB025615">
    <property type="protein sequence ID" value="BAB02945.1"/>
    <property type="status" value="JOINED"/>
    <property type="molecule type" value="Genomic_DNA"/>
</dbReference>
<dbReference type="EMBL" id="CP002686">
    <property type="protein sequence ID" value="AEE77527.1"/>
    <property type="molecule type" value="Genomic_DNA"/>
</dbReference>
<dbReference type="EMBL" id="AY062638">
    <property type="protein sequence ID" value="AAL32716.1"/>
    <property type="molecule type" value="mRNA"/>
</dbReference>
<dbReference type="EMBL" id="BT008716">
    <property type="protein sequence ID" value="AAP42729.1"/>
    <property type="molecule type" value="mRNA"/>
</dbReference>
<dbReference type="RefSeq" id="NP_189546.1">
    <property type="nucleotide sequence ID" value="NM_113825.4"/>
</dbReference>
<dbReference type="SMR" id="Q9LJW3"/>
<dbReference type="IntAct" id="Q9LJW3">
    <property type="interactions" value="15"/>
</dbReference>
<dbReference type="STRING" id="3702.Q9LJW3"/>
<dbReference type="PaxDb" id="3702-AT3G29035.1"/>
<dbReference type="ProteomicsDB" id="251226"/>
<dbReference type="DNASU" id="822547"/>
<dbReference type="EnsemblPlants" id="AT3G29035.1">
    <property type="protein sequence ID" value="AT3G29035.1"/>
    <property type="gene ID" value="AT3G29035"/>
</dbReference>
<dbReference type="GeneID" id="822547"/>
<dbReference type="Gramene" id="AT3G29035.1">
    <property type="protein sequence ID" value="AT3G29035.1"/>
    <property type="gene ID" value="AT3G29035"/>
</dbReference>
<dbReference type="KEGG" id="ath:AT3G29035"/>
<dbReference type="Araport" id="AT3G29035"/>
<dbReference type="TAIR" id="AT3G29035">
    <property type="gene designation" value="NAC3"/>
</dbReference>
<dbReference type="eggNOG" id="ENOG502QR2M">
    <property type="taxonomic scope" value="Eukaryota"/>
</dbReference>
<dbReference type="HOGENOM" id="CLU_035664_5_2_1"/>
<dbReference type="InParanoid" id="Q9LJW3"/>
<dbReference type="OMA" id="ITHYLRP"/>
<dbReference type="PhylomeDB" id="Q9LJW3"/>
<dbReference type="PRO" id="PR:Q9LJW3"/>
<dbReference type="Proteomes" id="UP000006548">
    <property type="component" value="Chromosome 3"/>
</dbReference>
<dbReference type="ExpressionAtlas" id="Q9LJW3">
    <property type="expression patterns" value="baseline and differential"/>
</dbReference>
<dbReference type="GO" id="GO:0005634">
    <property type="term" value="C:nucleus"/>
    <property type="evidence" value="ECO:0000314"/>
    <property type="project" value="TAIR"/>
</dbReference>
<dbReference type="GO" id="GO:0003700">
    <property type="term" value="F:DNA-binding transcription factor activity"/>
    <property type="evidence" value="ECO:0000314"/>
    <property type="project" value="UniProtKB"/>
</dbReference>
<dbReference type="GO" id="GO:0043565">
    <property type="term" value="F:sequence-specific DNA binding"/>
    <property type="evidence" value="ECO:0000314"/>
    <property type="project" value="UniProtKB"/>
</dbReference>
<dbReference type="GO" id="GO:0000976">
    <property type="term" value="F:transcription cis-regulatory region binding"/>
    <property type="evidence" value="ECO:0000353"/>
    <property type="project" value="TAIR"/>
</dbReference>
<dbReference type="GO" id="GO:0010150">
    <property type="term" value="P:leaf senescence"/>
    <property type="evidence" value="ECO:0000315"/>
    <property type="project" value="TAIR"/>
</dbReference>
<dbReference type="GO" id="GO:0051091">
    <property type="term" value="P:positive regulation of DNA-binding transcription factor activity"/>
    <property type="evidence" value="ECO:0000314"/>
    <property type="project" value="UniProtKB"/>
</dbReference>
<dbReference type="GO" id="GO:1900057">
    <property type="term" value="P:positive regulation of leaf senescence"/>
    <property type="evidence" value="ECO:0000315"/>
    <property type="project" value="UniProtKB"/>
</dbReference>
<dbReference type="GO" id="GO:0042542">
    <property type="term" value="P:response to hydrogen peroxide"/>
    <property type="evidence" value="ECO:0000314"/>
    <property type="project" value="UniProtKB"/>
</dbReference>
<dbReference type="GO" id="GO:0009611">
    <property type="term" value="P:response to wounding"/>
    <property type="evidence" value="ECO:0000270"/>
    <property type="project" value="UniProtKB"/>
</dbReference>
<dbReference type="FunFam" id="2.170.150.80:FF:000006">
    <property type="entry name" value="NAC domain-containing protein 100-like"/>
    <property type="match status" value="1"/>
</dbReference>
<dbReference type="Gene3D" id="2.170.150.80">
    <property type="entry name" value="NAC domain"/>
    <property type="match status" value="1"/>
</dbReference>
<dbReference type="InterPro" id="IPR003441">
    <property type="entry name" value="NAC-dom"/>
</dbReference>
<dbReference type="InterPro" id="IPR036093">
    <property type="entry name" value="NAC_dom_sf"/>
</dbReference>
<dbReference type="PANTHER" id="PTHR31744:SF209">
    <property type="entry name" value="NAC DOMAIN-CONTAINING PROTEIN 59"/>
    <property type="match status" value="1"/>
</dbReference>
<dbReference type="PANTHER" id="PTHR31744">
    <property type="entry name" value="PROTEIN CUP-SHAPED COTYLEDON 2-RELATED"/>
    <property type="match status" value="1"/>
</dbReference>
<dbReference type="Pfam" id="PF02365">
    <property type="entry name" value="NAM"/>
    <property type="match status" value="1"/>
</dbReference>
<dbReference type="SUPFAM" id="SSF101941">
    <property type="entry name" value="NAC domain"/>
    <property type="match status" value="1"/>
</dbReference>
<dbReference type="PROSITE" id="PS51005">
    <property type="entry name" value="NAC"/>
    <property type="match status" value="1"/>
</dbReference>
<comment type="function">
    <text evidence="3 5">Transcription activator that binds to DNA in promoters of target genes on a specific bipartite motif 5'-[AG]CGT[AG](4-5n)[AG][CT]ACGCAA-3' (PubMed:16359384, PubMed:21303842). Triggers the expression of senescence-associated genes during age-, salt- and dark-induced senescence through a regulatory network that may involve cross-talk with salt- and H(2)O(2)-dependent signaling pathways (PubMed:21303842).</text>
</comment>
<comment type="interaction">
    <interactant intactId="EBI-4431790">
        <id>Q9LJW3</id>
    </interactant>
    <interactant intactId="EBI-15191527">
        <id>A0A178UQH2</id>
        <label>At5g50820</label>
    </interactant>
    <organismsDiffer>false</organismsDiffer>
    <experiments>3</experiments>
</comment>
<comment type="interaction">
    <interactant intactId="EBI-4431790">
        <id>Q9LJW3</id>
    </interactant>
    <interactant intactId="EBI-15193025">
        <id>Q9LXU1</id>
        <label>NOT9B</label>
    </interactant>
    <organismsDiffer>false</organismsDiffer>
    <experiments>3</experiments>
</comment>
<comment type="subcellular location">
    <subcellularLocation>
        <location evidence="1 2">Nucleus</location>
    </subcellularLocation>
</comment>
<comment type="tissue specificity">
    <text evidence="4 5">Mostly expressed in root cortex, phloem, atrichoblast and quiescent center (QC), and, to a lower extent, in root endodermis, xylem, pericycle, columella and lateral root cap (LRC) (PubMed:16581911). Expressed in roots, cotyledons, very young leaves, senescing leaves, mature flowers and pollen (PubMed:21303842).</text>
</comment>
<comment type="developmental stage">
    <text evidence="5">Age-dependent accumulation. First observed in young seedlings in cotyledons and regularly in the tip regions of very young leaves. Accumulates strongly in older leaf parts at the senescence onset. In flowers, present in mature organs such as old sepals, petals, old stamens, mature anthers, and pollen grains. Confined to floral organ abscission zone of mature flowers. Also observed in roots.</text>
</comment>
<comment type="induction">
    <text evidence="5">Rapidly and strongly induced by H(2)O(2) treatment in both leaves and roots. Accumulates during senescence and in response to wounding.</text>
</comment>
<comment type="domain">
    <text evidence="2">The NAC domain includes a DNA binding domain and a dimerization domain.</text>
</comment>
<comment type="disruption phenotype">
    <text evidence="5">Delayed senescence accompanied by a small delay in flowering time.</text>
</comment>
<organism evidence="11">
    <name type="scientific">Arabidopsis thaliana</name>
    <name type="common">Mouse-ear cress</name>
    <dbReference type="NCBI Taxonomy" id="3702"/>
    <lineage>
        <taxon>Eukaryota</taxon>
        <taxon>Viridiplantae</taxon>
        <taxon>Streptophyta</taxon>
        <taxon>Embryophyta</taxon>
        <taxon>Tracheophyta</taxon>
        <taxon>Spermatophyta</taxon>
        <taxon>Magnoliopsida</taxon>
        <taxon>eudicotyledons</taxon>
        <taxon>Gunneridae</taxon>
        <taxon>Pentapetalae</taxon>
        <taxon>rosids</taxon>
        <taxon>malvids</taxon>
        <taxon>Brassicales</taxon>
        <taxon>Brassicaceae</taxon>
        <taxon>Camelineae</taxon>
        <taxon>Arabidopsis</taxon>
    </lineage>
</organism>